<gene>
    <name type="primary">arsB</name>
    <name type="synonym">arsF</name>
    <name type="ordered locus">b3502</name>
    <name type="ordered locus">JW3469</name>
</gene>
<proteinExistence type="evidence at protein level"/>
<evidence type="ECO:0000250" key="1"/>
<evidence type="ECO:0000255" key="2"/>
<evidence type="ECO:0000305" key="3"/>
<keyword id="KW-0059">Arsenical resistance</keyword>
<keyword id="KW-0997">Cell inner membrane</keyword>
<keyword id="KW-1003">Cell membrane</keyword>
<keyword id="KW-0472">Membrane</keyword>
<keyword id="KW-1185">Reference proteome</keyword>
<keyword id="KW-0812">Transmembrane</keyword>
<keyword id="KW-1133">Transmembrane helix</keyword>
<keyword id="KW-0813">Transport</keyword>
<comment type="function">
    <text evidence="1">Involved in arsenical resistance. Thought to form the channel of an arsenite pump (By similarity).</text>
</comment>
<comment type="subcellular location">
    <subcellularLocation>
        <location>Cell inner membrane</location>
        <topology>Multi-pass membrane protein</topology>
    </subcellularLocation>
</comment>
<comment type="similarity">
    <text evidence="3">Belongs to the ArsB family.</text>
</comment>
<comment type="sequence caution" evidence="3">
    <conflict type="erroneous initiation">
        <sequence resource="EMBL-CDS" id="AAB18478"/>
    </conflict>
    <text>Extended N-terminus.</text>
</comment>
<sequence>MLLAGAIFVLTIVLVIWQPKGLGIGWSATLGAVLALVTGVVHPGDIPVVWNIVWNATAAFIAVIIISLLLDESGFFEWAALHVSRWGNGRGRLLFTWIVLLGAAVAALFANDGAALILTPIVIAMLLALGFSKGTTLAFVMAAGFIADTASLPLIVSNLVNIVSADFFGLGFREYASVMVPVDIAAIVATLVMLHLYFRKDIPQNYDMALLKSPAEAIKDPATFKTGWVVLLLLLVGFFVLEPLGIPVSAIAAVGALILFVVAKRGHAINTGKVLRGAPWQIVIFSLGMYLVVYGLRNAGLTEYLSGVLNVLADNGLWAATLGTGFLTAFLSSIMNNMPTVLVGALSIDGSTASGVIKEAMVYANVIGCDLGPKITPIGSLATLLWLHVLSQKNMTISWGYYFRTGIIMTLPVLFVTLAALALRLSFTL</sequence>
<feature type="chain" id="PRO_0000201467" description="Arsenical pump membrane protein">
    <location>
        <begin position="1"/>
        <end position="429"/>
    </location>
</feature>
<feature type="topological domain" description="Cytoplasmic" evidence="2">
    <location>
        <begin position="1"/>
        <end position="20"/>
    </location>
</feature>
<feature type="transmembrane region" description="Helical" evidence="2">
    <location>
        <begin position="21"/>
        <end position="41"/>
    </location>
</feature>
<feature type="topological domain" description="Periplasmic" evidence="2">
    <location>
        <begin position="42"/>
        <end position="45"/>
    </location>
</feature>
<feature type="transmembrane region" description="Helical" evidence="2">
    <location>
        <begin position="46"/>
        <end position="66"/>
    </location>
</feature>
<feature type="topological domain" description="Cytoplasmic" evidence="2">
    <location>
        <begin position="67"/>
        <end position="97"/>
    </location>
</feature>
<feature type="transmembrane region" description="Helical" evidence="2">
    <location>
        <begin position="98"/>
        <end position="118"/>
    </location>
</feature>
<feature type="topological domain" description="Periplasmic" evidence="2">
    <location>
        <begin position="119"/>
        <end position="120"/>
    </location>
</feature>
<feature type="transmembrane region" description="Helical" evidence="2">
    <location>
        <begin position="121"/>
        <end position="141"/>
    </location>
</feature>
<feature type="topological domain" description="Cytoplasmic" evidence="2">
    <location>
        <begin position="142"/>
        <end position="151"/>
    </location>
</feature>
<feature type="transmembrane region" description="Helical" evidence="2">
    <location>
        <begin position="152"/>
        <end position="172"/>
    </location>
</feature>
<feature type="topological domain" description="Periplasmic" evidence="2">
    <location>
        <begin position="173"/>
        <end position="177"/>
    </location>
</feature>
<feature type="transmembrane region" description="Helical" evidence="2">
    <location>
        <begin position="178"/>
        <end position="198"/>
    </location>
</feature>
<feature type="topological domain" description="Cytoplasmic" evidence="2">
    <location>
        <begin position="199"/>
        <end position="227"/>
    </location>
</feature>
<feature type="transmembrane region" description="Helical" evidence="2">
    <location>
        <begin position="228"/>
        <end position="248"/>
    </location>
</feature>
<feature type="transmembrane region" description="Helical" evidence="2">
    <location>
        <begin position="249"/>
        <end position="269"/>
    </location>
</feature>
<feature type="topological domain" description="Cytoplasmic" evidence="2">
    <location>
        <begin position="270"/>
        <end position="273"/>
    </location>
</feature>
<feature type="transmembrane region" description="Helical" evidence="2">
    <location>
        <begin position="274"/>
        <end position="294"/>
    </location>
</feature>
<feature type="topological domain" description="Periplasmic" evidence="2">
    <location>
        <begin position="295"/>
        <end position="310"/>
    </location>
</feature>
<feature type="transmembrane region" description="Helical" evidence="2">
    <location>
        <begin position="311"/>
        <end position="331"/>
    </location>
</feature>
<feature type="topological domain" description="Cytoplasmic" evidence="2">
    <location>
        <begin position="332"/>
        <end position="406"/>
    </location>
</feature>
<feature type="transmembrane region" description="Helical" evidence="2">
    <location>
        <begin position="407"/>
        <end position="427"/>
    </location>
</feature>
<feature type="topological domain" description="Periplasmic" evidence="2">
    <location>
        <begin position="428"/>
        <end position="429"/>
    </location>
</feature>
<dbReference type="EMBL" id="X80057">
    <property type="protein sequence ID" value="CAA56362.1"/>
    <property type="molecule type" value="Genomic_DNA"/>
</dbReference>
<dbReference type="EMBL" id="U00039">
    <property type="protein sequence ID" value="AAB18478.1"/>
    <property type="status" value="ALT_INIT"/>
    <property type="molecule type" value="Genomic_DNA"/>
</dbReference>
<dbReference type="EMBL" id="U00096">
    <property type="protein sequence ID" value="AAC76527.2"/>
    <property type="molecule type" value="Genomic_DNA"/>
</dbReference>
<dbReference type="EMBL" id="AP009048">
    <property type="protein sequence ID" value="BAE77792.1"/>
    <property type="molecule type" value="Genomic_DNA"/>
</dbReference>
<dbReference type="PIR" id="S47723">
    <property type="entry name" value="S47723"/>
</dbReference>
<dbReference type="RefSeq" id="NP_417959.4">
    <property type="nucleotide sequence ID" value="NC_000913.3"/>
</dbReference>
<dbReference type="RefSeq" id="WP_000922639.1">
    <property type="nucleotide sequence ID" value="NZ_SSZK01000042.1"/>
</dbReference>
<dbReference type="SMR" id="P0AB93"/>
<dbReference type="BioGRID" id="4261325">
    <property type="interactions" value="8"/>
</dbReference>
<dbReference type="FunCoup" id="P0AB93">
    <property type="interactions" value="291"/>
</dbReference>
<dbReference type="IntAct" id="P0AB93">
    <property type="interactions" value="1"/>
</dbReference>
<dbReference type="STRING" id="511145.b3502"/>
<dbReference type="TCDB" id="3.A.4.1.1">
    <property type="family name" value="the arsenite-antimonite (arsab) efflux family"/>
</dbReference>
<dbReference type="PaxDb" id="511145-b3502"/>
<dbReference type="EnsemblBacteria" id="AAC76527">
    <property type="protein sequence ID" value="AAC76527"/>
    <property type="gene ID" value="b3502"/>
</dbReference>
<dbReference type="GeneID" id="93778490"/>
<dbReference type="GeneID" id="948011"/>
<dbReference type="KEGG" id="ecj:JW3469"/>
<dbReference type="KEGG" id="eco:b3502"/>
<dbReference type="KEGG" id="ecoc:C3026_18970"/>
<dbReference type="PATRIC" id="fig|511145.12.peg.3606"/>
<dbReference type="EchoBASE" id="EB2148"/>
<dbReference type="eggNOG" id="COG1055">
    <property type="taxonomic scope" value="Bacteria"/>
</dbReference>
<dbReference type="HOGENOM" id="CLU_043931_1_0_6"/>
<dbReference type="InParanoid" id="P0AB93"/>
<dbReference type="OMA" id="EAGFFAW"/>
<dbReference type="OrthoDB" id="9774335at2"/>
<dbReference type="PhylomeDB" id="P0AB93"/>
<dbReference type="BioCyc" id="EcoCyc:ARSF-MONOMER"/>
<dbReference type="BioCyc" id="MetaCyc:ARSF-MONOMER"/>
<dbReference type="BRENDA" id="7.3.2.7">
    <property type="organism ID" value="2026"/>
</dbReference>
<dbReference type="PRO" id="PR:P0AB93"/>
<dbReference type="Proteomes" id="UP000000625">
    <property type="component" value="Chromosome"/>
</dbReference>
<dbReference type="GO" id="GO:0005886">
    <property type="term" value="C:plasma membrane"/>
    <property type="evidence" value="ECO:0000314"/>
    <property type="project" value="EcoCyc"/>
</dbReference>
<dbReference type="GO" id="GO:0042960">
    <property type="term" value="F:antimonite secondary active transmembrane transporter activity"/>
    <property type="evidence" value="ECO:0000314"/>
    <property type="project" value="EcoCyc"/>
</dbReference>
<dbReference type="GO" id="GO:0008490">
    <property type="term" value="F:arsenite secondary active transmembrane transporter activity"/>
    <property type="evidence" value="ECO:0000314"/>
    <property type="project" value="EcoCyc"/>
</dbReference>
<dbReference type="GO" id="GO:0015699">
    <property type="term" value="P:antimonite transmembrane transport"/>
    <property type="evidence" value="ECO:0000314"/>
    <property type="project" value="EcoCyc"/>
</dbReference>
<dbReference type="GO" id="GO:0015700">
    <property type="term" value="P:arsenite transport"/>
    <property type="evidence" value="ECO:0000314"/>
    <property type="project" value="EcoCyc"/>
</dbReference>
<dbReference type="GO" id="GO:0046685">
    <property type="term" value="P:response to arsenic-containing substance"/>
    <property type="evidence" value="ECO:0007669"/>
    <property type="project" value="UniProtKB-KW"/>
</dbReference>
<dbReference type="CDD" id="cd01118">
    <property type="entry name" value="ArsB_permease"/>
    <property type="match status" value="1"/>
</dbReference>
<dbReference type="InterPro" id="IPR000802">
    <property type="entry name" value="Arsenical_pump_ArsB"/>
</dbReference>
<dbReference type="NCBIfam" id="TIGR00935">
    <property type="entry name" value="2a45"/>
    <property type="match status" value="1"/>
</dbReference>
<dbReference type="NCBIfam" id="NF011980">
    <property type="entry name" value="PRK15445.1"/>
    <property type="match status" value="1"/>
</dbReference>
<dbReference type="PANTHER" id="PTHR43302">
    <property type="entry name" value="TRANSPORTER ARSB-RELATED"/>
    <property type="match status" value="1"/>
</dbReference>
<dbReference type="PANTHER" id="PTHR43302:SF5">
    <property type="entry name" value="TRANSPORTER ARSB-RELATED"/>
    <property type="match status" value="1"/>
</dbReference>
<dbReference type="Pfam" id="PF02040">
    <property type="entry name" value="ArsB"/>
    <property type="match status" value="1"/>
</dbReference>
<dbReference type="PRINTS" id="PR00758">
    <property type="entry name" value="ARSENICPUMP"/>
</dbReference>
<name>ARSB_ECOLI</name>
<organism>
    <name type="scientific">Escherichia coli (strain K12)</name>
    <dbReference type="NCBI Taxonomy" id="83333"/>
    <lineage>
        <taxon>Bacteria</taxon>
        <taxon>Pseudomonadati</taxon>
        <taxon>Pseudomonadota</taxon>
        <taxon>Gammaproteobacteria</taxon>
        <taxon>Enterobacterales</taxon>
        <taxon>Enterobacteriaceae</taxon>
        <taxon>Escherichia</taxon>
    </lineage>
</organism>
<reference key="1">
    <citation type="journal article" date="1995" name="J. Bacteriol.">
        <title>An Escherichia coli chromosomal ars operon homolog is functional in arsenic detoxification and is conserved in Gram-negative bacteria.</title>
        <authorList>
            <person name="Diorio C."/>
            <person name="Cai J."/>
            <person name="Marmor J."/>
            <person name="Shinder R."/>
            <person name="Dubow M.S."/>
        </authorList>
    </citation>
    <scope>NUCLEOTIDE SEQUENCE [GENOMIC DNA]</scope>
    <source>
        <strain>K12</strain>
    </source>
</reference>
<reference key="2">
    <citation type="journal article" date="1994" name="Nucleic Acids Res.">
        <title>Analysis of the Escherichia coli genome. V. DNA sequence of the region from 76.0 to 81.5 minutes.</title>
        <authorList>
            <person name="Sofia H.J."/>
            <person name="Burland V."/>
            <person name="Daniels D.L."/>
            <person name="Plunkett G. III"/>
            <person name="Blattner F.R."/>
        </authorList>
    </citation>
    <scope>NUCLEOTIDE SEQUENCE [LARGE SCALE GENOMIC DNA]</scope>
    <source>
        <strain>K12 / MG1655 / ATCC 47076</strain>
    </source>
</reference>
<reference key="3">
    <citation type="journal article" date="1997" name="Science">
        <title>The complete genome sequence of Escherichia coli K-12.</title>
        <authorList>
            <person name="Blattner F.R."/>
            <person name="Plunkett G. III"/>
            <person name="Bloch C.A."/>
            <person name="Perna N.T."/>
            <person name="Burland V."/>
            <person name="Riley M."/>
            <person name="Collado-Vides J."/>
            <person name="Glasner J.D."/>
            <person name="Rode C.K."/>
            <person name="Mayhew G.F."/>
            <person name="Gregor J."/>
            <person name="Davis N.W."/>
            <person name="Kirkpatrick H.A."/>
            <person name="Goeden M.A."/>
            <person name="Rose D.J."/>
            <person name="Mau B."/>
            <person name="Shao Y."/>
        </authorList>
    </citation>
    <scope>NUCLEOTIDE SEQUENCE [LARGE SCALE GENOMIC DNA]</scope>
    <source>
        <strain>K12 / MG1655 / ATCC 47076</strain>
    </source>
</reference>
<reference key="4">
    <citation type="journal article" date="2006" name="Mol. Syst. Biol.">
        <title>Highly accurate genome sequences of Escherichia coli K-12 strains MG1655 and W3110.</title>
        <authorList>
            <person name="Hayashi K."/>
            <person name="Morooka N."/>
            <person name="Yamamoto Y."/>
            <person name="Fujita K."/>
            <person name="Isono K."/>
            <person name="Choi S."/>
            <person name="Ohtsubo E."/>
            <person name="Baba T."/>
            <person name="Wanner B.L."/>
            <person name="Mori H."/>
            <person name="Horiuchi T."/>
        </authorList>
    </citation>
    <scope>NUCLEOTIDE SEQUENCE [LARGE SCALE GENOMIC DNA]</scope>
    <source>
        <strain>K12 / W3110 / ATCC 27325 / DSM 5911</strain>
    </source>
</reference>
<reference key="5">
    <citation type="journal article" date="1992" name="J. Biol. Chem.">
        <title>Membrane topology of the ArsB protein, the membrane subunit of an anion-translocating ATPase.</title>
        <authorList>
            <person name="Wu J."/>
            <person name="Tisa L.S."/>
            <person name="Rosen B.P."/>
        </authorList>
    </citation>
    <scope>TOPOLOGY</scope>
</reference>
<reference key="6">
    <citation type="journal article" date="2005" name="Science">
        <title>Global topology analysis of the Escherichia coli inner membrane proteome.</title>
        <authorList>
            <person name="Daley D.O."/>
            <person name="Rapp M."/>
            <person name="Granseth E."/>
            <person name="Melen K."/>
            <person name="Drew D."/>
            <person name="von Heijne G."/>
        </authorList>
    </citation>
    <scope>TOPOLOGY [LARGE SCALE ANALYSIS]</scope>
    <source>
        <strain>K12 / MG1655 / ATCC 47076</strain>
    </source>
</reference>
<protein>
    <recommendedName>
        <fullName>Arsenical pump membrane protein</fullName>
    </recommendedName>
    <alternativeName>
        <fullName>Arsenic efflux pump protein</fullName>
    </alternativeName>
</protein>
<accession>P0AB93</accession>
<accession>P37310</accession>
<accession>P76708</accession>
<accession>Q2M7G4</accession>